<reference key="1">
    <citation type="journal article" date="2007" name="Toxicon">
        <title>Venomic analyses of Scolopendra viridicornis nigra and Scolopendra angulata (Centipede, Scolopendromorpha): shedding light on venoms from a neglected group.</title>
        <authorList>
            <person name="Rates B."/>
            <person name="Bemquerer M.P."/>
            <person name="Richardson M."/>
            <person name="Borges M.H."/>
            <person name="Morales R.A.V."/>
            <person name="De Lima M.E."/>
            <person name="Pimenta A.M.C."/>
        </authorList>
    </citation>
    <scope>PROTEIN SEQUENCE</scope>
    <scope>MASS SPECTROMETRY</scope>
    <scope>SUBCELLULAR LOCATION</scope>
    <source>
        <tissue>Venom</tissue>
    </source>
</reference>
<dbReference type="GO" id="GO:0005576">
    <property type="term" value="C:extracellular region"/>
    <property type="evidence" value="ECO:0007669"/>
    <property type="project" value="UniProtKB-SubCell"/>
</dbReference>
<dbReference type="GO" id="GO:0090729">
    <property type="term" value="F:toxin activity"/>
    <property type="evidence" value="ECO:0007669"/>
    <property type="project" value="UniProtKB-KW"/>
</dbReference>
<keyword id="KW-0903">Direct protein sequencing</keyword>
<keyword id="KW-0528">Neurotoxin</keyword>
<keyword id="KW-0964">Secreted</keyword>
<keyword id="KW-0800">Toxin</keyword>
<name>STX8B_SCOAN</name>
<sequence length="10" mass="1120">LKVPDLPLPE</sequence>
<proteinExistence type="evidence at protein level"/>
<comment type="subcellular location">
    <subcellularLocation>
        <location evidence="1">Secreted</location>
    </subcellularLocation>
</comment>
<comment type="tissue specificity">
    <text evidence="3">Expressed by the venom gland.</text>
</comment>
<comment type="mass spectrometry" mass="8013.07" method="Electrospray" evidence="1"/>
<comment type="similarity">
    <text evidence="2">Belongs to the scolopendra toxin 8 family.</text>
</comment>
<feature type="chain" id="PRO_0000352866" description="Scolopendra 8013.07 Da toxin">
    <location>
        <begin position="1"/>
        <end position="10" status="greater than"/>
    </location>
</feature>
<feature type="non-terminal residue">
    <location>
        <position position="10"/>
    </location>
</feature>
<accession>P0C8D0</accession>
<organism>
    <name type="scientific">Scolopendra angulata</name>
    <name type="common">Barbados giant red centipede</name>
    <dbReference type="NCBI Taxonomy" id="486498"/>
    <lineage>
        <taxon>Eukaryota</taxon>
        <taxon>Metazoa</taxon>
        <taxon>Ecdysozoa</taxon>
        <taxon>Arthropoda</taxon>
        <taxon>Myriapoda</taxon>
        <taxon>Chilopoda</taxon>
        <taxon>Pleurostigmophora</taxon>
        <taxon>Scolopendromorpha</taxon>
        <taxon>Scolopendridae</taxon>
        <taxon>Scolopendra</taxon>
    </lineage>
</organism>
<evidence type="ECO:0000269" key="1">
    <source>
    </source>
</evidence>
<evidence type="ECO:0000305" key="2"/>
<evidence type="ECO:0000305" key="3">
    <source>
    </source>
</evidence>
<protein>
    <recommendedName>
        <fullName>Scolopendra 8013.07 Da toxin</fullName>
    </recommendedName>
</protein>